<accession>P09006</accession>
<accession>Q03312</accession>
<proteinExistence type="evidence at protein level"/>
<gene>
    <name type="primary">Serpina3n</name>
    <name type="synonym">Spin2c</name>
</gene>
<name>SPA3N_RAT</name>
<keyword id="KW-0325">Glycoprotein</keyword>
<keyword id="KW-0597">Phosphoprotein</keyword>
<keyword id="KW-0646">Protease inhibitor</keyword>
<keyword id="KW-1185">Reference proteome</keyword>
<keyword id="KW-0964">Secreted</keyword>
<keyword id="KW-0722">Serine protease inhibitor</keyword>
<keyword id="KW-0732">Signal</keyword>
<comment type="subcellular location">
    <subcellularLocation>
        <location evidence="1">Secreted</location>
    </subcellularLocation>
</comment>
<comment type="tissue specificity">
    <text evidence="4">Liver.</text>
</comment>
<comment type="induction">
    <text evidence="3">By acute inflammation.</text>
</comment>
<comment type="domain">
    <text evidence="1">The reactive center loop (RCL) extends out from the body of the protein and directs binding to the target protease. The protease cleaves the serpin at the reactive site within the RCL, establishing a covalent linkage between the serpin reactive site and the protease. The resulting inactive serpin-protease complex is highly stable (By similarity). Variability within the reactive center loop (RCL) sequences of Serpina3 paralogs may determine target protease specificity.</text>
</comment>
<comment type="PTM">
    <text evidence="3">N-glycosylated.</text>
</comment>
<comment type="miscellaneous">
    <text>The single human alpha1-antichymotrypsin gene (SERPINA3) is represented by a cluster of 6 individual rat paralogs.</text>
</comment>
<comment type="similarity">
    <text evidence="5">Belongs to the serpin family.</text>
</comment>
<comment type="caution">
    <text evidence="5">It is uncertain whether Met-1 or Met-11 is the initiator.</text>
</comment>
<comment type="sequence caution" evidence="5">
    <conflict type="erroneous initiation">
        <sequence resource="EMBL-CDS" id="AAH78796"/>
    </conflict>
</comment>
<comment type="sequence caution" evidence="5">
    <conflict type="erroneous initiation">
        <sequence resource="EMBL-CDS" id="CAA34408"/>
    </conflict>
    <text>Truncated N-terminus.</text>
</comment>
<comment type="sequence caution" evidence="5">
    <conflict type="frameshift">
        <sequence resource="EMBL-CDS" id="CAA34408"/>
    </conflict>
</comment>
<feature type="signal peptide" evidence="1">
    <location>
        <begin position="1"/>
        <end position="29"/>
    </location>
</feature>
<feature type="chain" id="PRO_0000032423" description="Serine protease inhibitor A3N">
    <location>
        <begin position="30"/>
        <end position="418"/>
    </location>
</feature>
<feature type="region of interest" description="RCL">
    <location>
        <begin position="367"/>
        <end position="394"/>
    </location>
</feature>
<feature type="site" description="Reactive bond" evidence="2">
    <location>
        <begin position="381"/>
        <end position="382"/>
    </location>
</feature>
<feature type="modified residue" description="Phosphoserine" evidence="6">
    <location>
        <position position="93"/>
    </location>
</feature>
<feature type="glycosylation site" description="N-linked (GlcNAc...) asparagine" evidence="2">
    <location>
        <position position="104"/>
    </location>
</feature>
<feature type="glycosylation site" description="N-linked (GlcNAc...) asparagine" evidence="2">
    <location>
        <position position="258"/>
    </location>
</feature>
<feature type="glycosylation site" description="N-linked (GlcNAc...) asparagine" evidence="2">
    <location>
        <position position="269"/>
    </location>
</feature>
<feature type="sequence conflict" description="In Ref. 3; CAA34408." evidence="5" ref="3">
    <original>A</original>
    <variation>D</variation>
    <location>
        <position position="12"/>
    </location>
</feature>
<feature type="sequence conflict" description="In Ref. 3; CAA34408." evidence="5" ref="3">
    <original>C</original>
    <variation>S</variation>
    <location>
        <position position="20"/>
    </location>
</feature>
<feature type="sequence conflict" description="In Ref. 3; CAA34408." evidence="5" ref="3">
    <original>D</original>
    <variation>H</variation>
    <location>
        <position position="68"/>
    </location>
</feature>
<feature type="sequence conflict" description="In Ref. 3; CAA34408." evidence="5" ref="3">
    <original>N</original>
    <variation>S</variation>
    <location>
        <position position="92"/>
    </location>
</feature>
<feature type="sequence conflict" description="In Ref. 3; CAA34408." evidence="5" ref="3">
    <original>P</original>
    <variation>S</variation>
    <location>
        <position position="236"/>
    </location>
</feature>
<feature type="sequence conflict" description="In Ref. 4; CAA31548." evidence="5" ref="4">
    <original>E</original>
    <variation>EE</variation>
    <location>
        <position position="323"/>
    </location>
</feature>
<feature type="sequence conflict" description="In Ref. 4; CAA31548." evidence="5" ref="4">
    <original>V</original>
    <variation>A</variation>
    <location>
        <position position="334"/>
    </location>
</feature>
<feature type="sequence conflict" description="In Ref. 3; CAA34408." evidence="5" ref="3">
    <original>S</original>
    <variation>F</variation>
    <location>
        <position position="353"/>
    </location>
</feature>
<feature type="sequence conflict" description="In Ref. 4; CAA31548." evidence="5" ref="4">
    <original>Q</original>
    <variation>E</variation>
    <location>
        <position position="354"/>
    </location>
</feature>
<feature type="sequence conflict" description="In Ref. 4; CAA31548." evidence="5" ref="4">
    <original>M</original>
    <variation>V</variation>
    <location>
        <position position="381"/>
    </location>
</feature>
<sequence length="418" mass="46652">MTRLVTLELLMAGIGSALLCFPDCILGEDTLFHEDQDKGTQLDSLTLASINTDFAFSLYKKLALRNPDKNVVFSPLSISAALAVVSLGAKGNSMEEILEGLKFNLTETPETEIHRGFGHLLQRLSQPRDEIQISTGNALFIEKRLQVLAEFQEKAKALYQAEAFTADFQQSREAKKLINDYVSKQTQGKIQGLITNLAKKTSMVLVNYIYFKGKWKVPFDPRDTFQSEFYSGKRRPVKVPMMKLEDLTTPYVRDEELNCTVVELKYTGNASALFILPDQGKMQQVEASLQPETLRRWKDSLRPSMIDELYLPKFSISADYNLEDVLPELGIKEVFSTQADLSGITGDKDLMVSQVVHKAVLDVAETGTEAAAATGVKFVPMSAKLDPLIIAFDRPFLMIISDTETAIAPFLAKIFNPK</sequence>
<organism>
    <name type="scientific">Rattus norvegicus</name>
    <name type="common">Rat</name>
    <dbReference type="NCBI Taxonomy" id="10116"/>
    <lineage>
        <taxon>Eukaryota</taxon>
        <taxon>Metazoa</taxon>
        <taxon>Chordata</taxon>
        <taxon>Craniata</taxon>
        <taxon>Vertebrata</taxon>
        <taxon>Euteleostomi</taxon>
        <taxon>Mammalia</taxon>
        <taxon>Eutheria</taxon>
        <taxon>Euarchontoglires</taxon>
        <taxon>Glires</taxon>
        <taxon>Rodentia</taxon>
        <taxon>Myomorpha</taxon>
        <taxon>Muroidea</taxon>
        <taxon>Muridae</taxon>
        <taxon>Murinae</taxon>
        <taxon>Rattus</taxon>
    </lineage>
</organism>
<reference key="1">
    <citation type="journal article" date="1990" name="Eur. J. Biochem.">
        <title>Molecular characterization of three rat liver serine-protease inhibitors affected by inflammation and hypophysectomy. Protein and mRNA analysis and cDNA cloning.</title>
        <authorList>
            <person name="Pages G."/>
            <person name="Rouayrenc J.F."/>
            <person name="le Cam G."/>
            <person name="Mariller M."/>
            <person name="le Cam A."/>
        </authorList>
    </citation>
    <scope>NUCLEOTIDE SEQUENCE [MRNA]</scope>
    <scope>INDUCTION</scope>
    <scope>GLYCOSYLATION</scope>
    <source>
        <tissue>Liver</tissue>
    </source>
</reference>
<reference key="2">
    <citation type="journal article" date="1991" name="J. Biochem.">
        <title>Molecular cloning and characterization of rat contrapsin-like protease inhibitor and related proteins.</title>
        <authorList>
            <person name="Ohkubo K."/>
            <person name="Ogata S."/>
            <person name="Misumi Y."/>
            <person name="Takami N."/>
            <person name="Ikehara Y."/>
        </authorList>
    </citation>
    <scope>NUCLEOTIDE SEQUENCE [MRNA]</scope>
    <scope>TISSUE SPECIFICITY</scope>
    <source>
        <tissue>Liver</tissue>
    </source>
</reference>
<reference key="3">
    <citation type="journal article" date="2004" name="Genome Res.">
        <title>The status, quality, and expansion of the NIH full-length cDNA project: the Mammalian Gene Collection (MGC).</title>
        <authorList>
            <consortium name="The MGC Project Team"/>
        </authorList>
    </citation>
    <scope>NUCLEOTIDE SEQUENCE [LARGE SCALE MRNA]</scope>
    <source>
        <tissue>Kidney</tissue>
    </source>
</reference>
<reference key="4">
    <citation type="journal article" date="1987" name="Nature">
        <title>Accelerated evolution in the reactive centre regions of serine protease inhibitors.</title>
        <authorList>
            <person name="Hill R.E."/>
            <person name="Hastie N.D."/>
        </authorList>
    </citation>
    <scope>NUCLEOTIDE SEQUENCE [MRNA] OF 203-408</scope>
</reference>
<reference key="5">
    <citation type="journal article" date="2004" name="J. Mol. Evol.">
        <title>Expression patterns of murine antichymotrypsin-like genes reflect evolutionary divergence at the Serpina3 locus.</title>
        <authorList>
            <person name="Horvath A.J."/>
            <person name="Forsyth S.L."/>
            <person name="Coughlin P.B."/>
        </authorList>
    </citation>
    <scope>REGION RCL</scope>
</reference>
<reference key="6">
    <citation type="journal article" date="2012" name="Nat. Commun.">
        <title>Quantitative maps of protein phosphorylation sites across 14 different rat organs and tissues.</title>
        <authorList>
            <person name="Lundby A."/>
            <person name="Secher A."/>
            <person name="Lage K."/>
            <person name="Nordsborg N.B."/>
            <person name="Dmytriyev A."/>
            <person name="Lundby C."/>
            <person name="Olsen J.V."/>
        </authorList>
    </citation>
    <scope>PHOSPHORYLATION [LARGE SCALE ANALYSIS] AT SER-93</scope>
    <scope>IDENTIFICATION BY MASS SPECTROMETRY [LARGE SCALE ANALYSIS]</scope>
</reference>
<protein>
    <recommendedName>
        <fullName>Serine protease inhibitor A3N</fullName>
        <shortName>Serpin A3N</shortName>
    </recommendedName>
    <alternativeName>
        <fullName>CPI-26</fullName>
    </alternativeName>
    <alternativeName>
        <fullName>Contrapsin-like protease inhibitor 6</fullName>
    </alternativeName>
    <alternativeName>
        <fullName>SPI-2.2</fullName>
    </alternativeName>
    <alternativeName>
        <fullName>Serine protease inhibitor 3</fullName>
        <shortName>SPI-3</shortName>
    </alternativeName>
</protein>
<evidence type="ECO:0000250" key="1"/>
<evidence type="ECO:0000255" key="2"/>
<evidence type="ECO:0000269" key="3">
    <source>
    </source>
</evidence>
<evidence type="ECO:0000269" key="4">
    <source>
    </source>
</evidence>
<evidence type="ECO:0000305" key="5"/>
<evidence type="ECO:0007744" key="6">
    <source>
    </source>
</evidence>
<dbReference type="EMBL" id="X16359">
    <property type="protein sequence ID" value="CAA34408.1"/>
    <property type="status" value="ALT_SEQ"/>
    <property type="molecule type" value="mRNA"/>
</dbReference>
<dbReference type="EMBL" id="D00753">
    <property type="protein sequence ID" value="BAA00650.1"/>
    <property type="molecule type" value="mRNA"/>
</dbReference>
<dbReference type="EMBL" id="BC078796">
    <property type="protein sequence ID" value="AAH78796.2"/>
    <property type="status" value="ALT_INIT"/>
    <property type="molecule type" value="mRNA"/>
</dbReference>
<dbReference type="EMBL" id="X13150">
    <property type="protein sequence ID" value="CAA31548.1"/>
    <property type="molecule type" value="mRNA"/>
</dbReference>
<dbReference type="PIR" id="B26423">
    <property type="entry name" value="B26423"/>
</dbReference>
<dbReference type="RefSeq" id="NP_113719.3">
    <property type="nucleotide sequence ID" value="NM_031531.3"/>
</dbReference>
<dbReference type="SMR" id="P09006"/>
<dbReference type="FunCoup" id="P09006">
    <property type="interactions" value="62"/>
</dbReference>
<dbReference type="MEROPS" id="I04.078"/>
<dbReference type="GlyCosmos" id="P09006">
    <property type="glycosylation" value="3 sites, No reported glycans"/>
</dbReference>
<dbReference type="GlyGen" id="P09006">
    <property type="glycosylation" value="4 sites, 1 N-linked glycan (1 site), 1 O-linked glycan (1 site)"/>
</dbReference>
<dbReference type="iPTMnet" id="P09006"/>
<dbReference type="PhosphoSitePlus" id="P09006"/>
<dbReference type="PaxDb" id="10116-ENSRNOP00000014073"/>
<dbReference type="Ensembl" id="ENSRNOT00000014073.6">
    <property type="protein sequence ID" value="ENSRNOP00000014073.4"/>
    <property type="gene ID" value="ENSRNOG00000029949.6"/>
</dbReference>
<dbReference type="GeneID" id="24795"/>
<dbReference type="KEGG" id="rno:24795"/>
<dbReference type="UCSC" id="RGD:3747">
    <property type="organism name" value="rat"/>
</dbReference>
<dbReference type="AGR" id="RGD:3747"/>
<dbReference type="CTD" id="20716"/>
<dbReference type="RGD" id="3747">
    <property type="gene designation" value="Serpina3n"/>
</dbReference>
<dbReference type="eggNOG" id="KOG2392">
    <property type="taxonomic scope" value="Eukaryota"/>
</dbReference>
<dbReference type="GeneTree" id="ENSGT00940000154392"/>
<dbReference type="HOGENOM" id="CLU_023330_2_1_1"/>
<dbReference type="InParanoid" id="P09006"/>
<dbReference type="OMA" id="RHIDELY"/>
<dbReference type="OrthoDB" id="671595at2759"/>
<dbReference type="PhylomeDB" id="P09006"/>
<dbReference type="TreeFam" id="TF343201"/>
<dbReference type="PRO" id="PR:P09006"/>
<dbReference type="Proteomes" id="UP000002494">
    <property type="component" value="Chromosome 6"/>
</dbReference>
<dbReference type="GO" id="GO:0005576">
    <property type="term" value="C:extracellular region"/>
    <property type="evidence" value="ECO:0000266"/>
    <property type="project" value="RGD"/>
</dbReference>
<dbReference type="GO" id="GO:0005615">
    <property type="term" value="C:extracellular space"/>
    <property type="evidence" value="ECO:0000314"/>
    <property type="project" value="RGD"/>
</dbReference>
<dbReference type="GO" id="GO:0004867">
    <property type="term" value="F:serine-type endopeptidase inhibitor activity"/>
    <property type="evidence" value="ECO:0000318"/>
    <property type="project" value="GO_Central"/>
</dbReference>
<dbReference type="GO" id="GO:0071320">
    <property type="term" value="P:cellular response to cAMP"/>
    <property type="evidence" value="ECO:0000270"/>
    <property type="project" value="RGD"/>
</dbReference>
<dbReference type="GO" id="GO:0071385">
    <property type="term" value="P:cellular response to glucocorticoid stimulus"/>
    <property type="evidence" value="ECO:0000270"/>
    <property type="project" value="RGD"/>
</dbReference>
<dbReference type="GO" id="GO:0071347">
    <property type="term" value="P:cellular response to interleukin-1"/>
    <property type="evidence" value="ECO:0000270"/>
    <property type="project" value="RGD"/>
</dbReference>
<dbReference type="GO" id="GO:0071354">
    <property type="term" value="P:cellular response to interleukin-6"/>
    <property type="evidence" value="ECO:0000270"/>
    <property type="project" value="RGD"/>
</dbReference>
<dbReference type="GO" id="GO:0071346">
    <property type="term" value="P:cellular response to type II interferon"/>
    <property type="evidence" value="ECO:0000270"/>
    <property type="project" value="RGD"/>
</dbReference>
<dbReference type="GO" id="GO:0009617">
    <property type="term" value="P:response to bacterium"/>
    <property type="evidence" value="ECO:0000266"/>
    <property type="project" value="RGD"/>
</dbReference>
<dbReference type="GO" id="GO:0034097">
    <property type="term" value="P:response to cytokine"/>
    <property type="evidence" value="ECO:0000266"/>
    <property type="project" value="RGD"/>
</dbReference>
<dbReference type="GO" id="GO:0032496">
    <property type="term" value="P:response to lipopolysaccharide"/>
    <property type="evidence" value="ECO:0000270"/>
    <property type="project" value="RGD"/>
</dbReference>
<dbReference type="GO" id="GO:0043434">
    <property type="term" value="P:response to peptide hormone"/>
    <property type="evidence" value="ECO:0000266"/>
    <property type="project" value="RGD"/>
</dbReference>
<dbReference type="GO" id="GO:0034516">
    <property type="term" value="P:response to vitamin B6"/>
    <property type="evidence" value="ECO:0000270"/>
    <property type="project" value="RGD"/>
</dbReference>
<dbReference type="CDD" id="cd19551">
    <property type="entry name" value="serpinA3_A1AC"/>
    <property type="match status" value="1"/>
</dbReference>
<dbReference type="FunFam" id="3.30.497.10:FF:000001">
    <property type="entry name" value="Serine protease inhibitor"/>
    <property type="match status" value="1"/>
</dbReference>
<dbReference type="FunFam" id="2.30.39.10:FF:000002">
    <property type="entry name" value="Serpin family D member 1"/>
    <property type="match status" value="1"/>
</dbReference>
<dbReference type="Gene3D" id="2.30.39.10">
    <property type="entry name" value="Alpha-1-antitrypsin, domain 1"/>
    <property type="match status" value="1"/>
</dbReference>
<dbReference type="Gene3D" id="3.30.497.10">
    <property type="entry name" value="Antithrombin, subunit I, domain 2"/>
    <property type="match status" value="1"/>
</dbReference>
<dbReference type="InterPro" id="IPR023795">
    <property type="entry name" value="Serpin_CS"/>
</dbReference>
<dbReference type="InterPro" id="IPR023796">
    <property type="entry name" value="Serpin_dom"/>
</dbReference>
<dbReference type="InterPro" id="IPR000215">
    <property type="entry name" value="Serpin_fam"/>
</dbReference>
<dbReference type="InterPro" id="IPR036186">
    <property type="entry name" value="Serpin_sf"/>
</dbReference>
<dbReference type="InterPro" id="IPR042178">
    <property type="entry name" value="Serpin_sf_1"/>
</dbReference>
<dbReference type="InterPro" id="IPR042185">
    <property type="entry name" value="Serpin_sf_2"/>
</dbReference>
<dbReference type="PANTHER" id="PTHR11461:SF145">
    <property type="entry name" value="ALPHA-1-ANTICHYMOTRYPSIN"/>
    <property type="match status" value="1"/>
</dbReference>
<dbReference type="PANTHER" id="PTHR11461">
    <property type="entry name" value="SERINE PROTEASE INHIBITOR, SERPIN"/>
    <property type="match status" value="1"/>
</dbReference>
<dbReference type="Pfam" id="PF00079">
    <property type="entry name" value="Serpin"/>
    <property type="match status" value="1"/>
</dbReference>
<dbReference type="SMART" id="SM00093">
    <property type="entry name" value="SERPIN"/>
    <property type="match status" value="1"/>
</dbReference>
<dbReference type="SUPFAM" id="SSF56574">
    <property type="entry name" value="Serpins"/>
    <property type="match status" value="1"/>
</dbReference>
<dbReference type="PROSITE" id="PS00284">
    <property type="entry name" value="SERPIN"/>
    <property type="match status" value="1"/>
</dbReference>